<name>HEN2_ARATH</name>
<gene>
    <name evidence="6" type="primary">HEN2</name>
    <name evidence="8" type="ordered locus">At2g06990</name>
    <name evidence="9" type="ORF">T4E14.10</name>
</gene>
<feature type="initiator methionine" description="Removed" evidence="10">
    <location>
        <position position="1"/>
    </location>
</feature>
<feature type="chain" id="PRO_0000432897" description="DExH-box ATP-dependent RNA helicase DExH10">
    <location>
        <begin position="2"/>
        <end position="995"/>
    </location>
</feature>
<feature type="domain" description="Helicase ATP-binding" evidence="1">
    <location>
        <begin position="90"/>
        <end position="246"/>
    </location>
</feature>
<feature type="domain" description="Helicase C-terminal" evidence="2">
    <location>
        <begin position="323"/>
        <end position="524"/>
    </location>
</feature>
<feature type="region of interest" description="Disordered" evidence="3">
    <location>
        <begin position="1"/>
        <end position="42"/>
    </location>
</feature>
<feature type="region of interest" description="Disordered" evidence="3">
    <location>
        <begin position="290"/>
        <end position="318"/>
    </location>
</feature>
<feature type="short sequence motif" description="DEIH box" evidence="7">
    <location>
        <begin position="194"/>
        <end position="197"/>
    </location>
</feature>
<feature type="compositionally biased region" description="Basic and acidic residues" evidence="3">
    <location>
        <begin position="10"/>
        <end position="26"/>
    </location>
</feature>
<feature type="compositionally biased region" description="Gly residues" evidence="3">
    <location>
        <begin position="307"/>
        <end position="318"/>
    </location>
</feature>
<feature type="binding site" evidence="1">
    <location>
        <begin position="103"/>
        <end position="110"/>
    </location>
    <ligand>
        <name>ATP</name>
        <dbReference type="ChEBI" id="CHEBI:30616"/>
    </ligand>
</feature>
<feature type="modified residue" description="N-acetylserine" evidence="10">
    <location>
        <position position="2"/>
    </location>
</feature>
<dbReference type="EC" id="3.6.4.13"/>
<dbReference type="EMBL" id="AY050658">
    <property type="protein sequence ID" value="AAL11446.1"/>
    <property type="status" value="ALT_INIT"/>
    <property type="molecule type" value="mRNA"/>
</dbReference>
<dbReference type="EMBL" id="AC005171">
    <property type="protein sequence ID" value="AAC67203.2"/>
    <property type="molecule type" value="Genomic_DNA"/>
</dbReference>
<dbReference type="EMBL" id="CP002685">
    <property type="protein sequence ID" value="AEC06028.1"/>
    <property type="molecule type" value="Genomic_DNA"/>
</dbReference>
<dbReference type="EMBL" id="BT005794">
    <property type="protein sequence ID" value="AAO64196.1"/>
    <property type="molecule type" value="mRNA"/>
</dbReference>
<dbReference type="PIR" id="B84481">
    <property type="entry name" value="B84481"/>
</dbReference>
<dbReference type="RefSeq" id="NP_565338.1">
    <property type="nucleotide sequence ID" value="NM_126675.3"/>
</dbReference>
<dbReference type="SMR" id="Q9ZVW2"/>
<dbReference type="FunCoup" id="Q9ZVW2">
    <property type="interactions" value="2443"/>
</dbReference>
<dbReference type="IntAct" id="Q9ZVW2">
    <property type="interactions" value="1"/>
</dbReference>
<dbReference type="STRING" id="3702.Q9ZVW2"/>
<dbReference type="GlyGen" id="Q9ZVW2">
    <property type="glycosylation" value="1 site"/>
</dbReference>
<dbReference type="iPTMnet" id="Q9ZVW2"/>
<dbReference type="PaxDb" id="3702-AT2G06990.1"/>
<dbReference type="ProteomicsDB" id="230377"/>
<dbReference type="EnsemblPlants" id="AT2G06990.1">
    <property type="protein sequence ID" value="AT2G06990.1"/>
    <property type="gene ID" value="AT2G06990"/>
</dbReference>
<dbReference type="GeneID" id="815269"/>
<dbReference type="Gramene" id="AT2G06990.1">
    <property type="protein sequence ID" value="AT2G06990.1"/>
    <property type="gene ID" value="AT2G06990"/>
</dbReference>
<dbReference type="KEGG" id="ath:AT2G06990"/>
<dbReference type="Araport" id="AT2G06990"/>
<dbReference type="TAIR" id="AT2G06990">
    <property type="gene designation" value="HEN2"/>
</dbReference>
<dbReference type="eggNOG" id="KOG0948">
    <property type="taxonomic scope" value="Eukaryota"/>
</dbReference>
<dbReference type="HOGENOM" id="CLU_002902_0_1_1"/>
<dbReference type="InParanoid" id="Q9ZVW2"/>
<dbReference type="OMA" id="EDHARWA"/>
<dbReference type="OrthoDB" id="64767at2759"/>
<dbReference type="PhylomeDB" id="Q9ZVW2"/>
<dbReference type="PRO" id="PR:Q9ZVW2"/>
<dbReference type="Proteomes" id="UP000006548">
    <property type="component" value="Chromosome 2"/>
</dbReference>
<dbReference type="ExpressionAtlas" id="Q9ZVW2">
    <property type="expression patterns" value="baseline and differential"/>
</dbReference>
<dbReference type="GO" id="GO:0016607">
    <property type="term" value="C:nuclear speck"/>
    <property type="evidence" value="ECO:0000314"/>
    <property type="project" value="TAIR"/>
</dbReference>
<dbReference type="GO" id="GO:0005654">
    <property type="term" value="C:nucleoplasm"/>
    <property type="evidence" value="ECO:0000314"/>
    <property type="project" value="UniProtKB"/>
</dbReference>
<dbReference type="GO" id="GO:0005634">
    <property type="term" value="C:nucleus"/>
    <property type="evidence" value="ECO:0000250"/>
    <property type="project" value="TAIR"/>
</dbReference>
<dbReference type="GO" id="GO:0005524">
    <property type="term" value="F:ATP binding"/>
    <property type="evidence" value="ECO:0007669"/>
    <property type="project" value="UniProtKB-KW"/>
</dbReference>
<dbReference type="GO" id="GO:0016887">
    <property type="term" value="F:ATP hydrolysis activity"/>
    <property type="evidence" value="ECO:0007669"/>
    <property type="project" value="RHEA"/>
</dbReference>
<dbReference type="GO" id="GO:0003723">
    <property type="term" value="F:RNA binding"/>
    <property type="evidence" value="ECO:0007669"/>
    <property type="project" value="UniProtKB-KW"/>
</dbReference>
<dbReference type="GO" id="GO:0003724">
    <property type="term" value="F:RNA helicase activity"/>
    <property type="evidence" value="ECO:0000250"/>
    <property type="project" value="TAIR"/>
</dbReference>
<dbReference type="GO" id="GO:0006397">
    <property type="term" value="P:mRNA processing"/>
    <property type="evidence" value="ECO:0000315"/>
    <property type="project" value="UniProtKB"/>
</dbReference>
<dbReference type="GO" id="GO:0060149">
    <property type="term" value="P:negative regulation of post-transcriptional gene silencing"/>
    <property type="evidence" value="ECO:0000315"/>
    <property type="project" value="TAIR"/>
</dbReference>
<dbReference type="GO" id="GO:0006401">
    <property type="term" value="P:RNA catabolic process"/>
    <property type="evidence" value="ECO:0007669"/>
    <property type="project" value="InterPro"/>
</dbReference>
<dbReference type="GO" id="GO:0016070">
    <property type="term" value="P:RNA metabolic process"/>
    <property type="evidence" value="ECO:0000304"/>
    <property type="project" value="TAIR"/>
</dbReference>
<dbReference type="GO" id="GO:0010093">
    <property type="term" value="P:specification of floral organ identity"/>
    <property type="evidence" value="ECO:0000315"/>
    <property type="project" value="TAIR"/>
</dbReference>
<dbReference type="CDD" id="cd18024">
    <property type="entry name" value="DEXHc_Mtr4-like"/>
    <property type="match status" value="1"/>
</dbReference>
<dbReference type="CDD" id="cd13154">
    <property type="entry name" value="KOW_Mtr4"/>
    <property type="match status" value="1"/>
</dbReference>
<dbReference type="CDD" id="cd18795">
    <property type="entry name" value="SF2_C_Ski2"/>
    <property type="match status" value="1"/>
</dbReference>
<dbReference type="FunFam" id="3.40.50.300:FF:000083">
    <property type="entry name" value="ATP-dependent RNA helicase DOB1"/>
    <property type="match status" value="1"/>
</dbReference>
<dbReference type="FunFam" id="3.40.50.300:FF:000141">
    <property type="entry name" value="ATP-dependent RNA helicase DOB1"/>
    <property type="match status" value="1"/>
</dbReference>
<dbReference type="FunFam" id="1.10.3380.30:FF:000006">
    <property type="entry name" value="DExH-box ATP-dependent RNA helicase DExH10"/>
    <property type="match status" value="1"/>
</dbReference>
<dbReference type="FunFam" id="2.40.30.300:FF:000001">
    <property type="entry name" value="Mtr4 exosome RNA helicase"/>
    <property type="match status" value="1"/>
</dbReference>
<dbReference type="Gene3D" id="1.10.3380.30">
    <property type="match status" value="1"/>
</dbReference>
<dbReference type="Gene3D" id="2.40.30.300">
    <property type="match status" value="1"/>
</dbReference>
<dbReference type="Gene3D" id="3.40.50.300">
    <property type="entry name" value="P-loop containing nucleotide triphosphate hydrolases"/>
    <property type="match status" value="2"/>
</dbReference>
<dbReference type="InterPro" id="IPR011545">
    <property type="entry name" value="DEAD/DEAH_box_helicase_dom"/>
</dbReference>
<dbReference type="InterPro" id="IPR014001">
    <property type="entry name" value="Helicase_ATP-bd"/>
</dbReference>
<dbReference type="InterPro" id="IPR001650">
    <property type="entry name" value="Helicase_C-like"/>
</dbReference>
<dbReference type="InterPro" id="IPR048392">
    <property type="entry name" value="MTR4-like_stalk"/>
</dbReference>
<dbReference type="InterPro" id="IPR025696">
    <property type="entry name" value="MTR4_beta-barrel"/>
</dbReference>
<dbReference type="InterPro" id="IPR027417">
    <property type="entry name" value="P-loop_NTPase"/>
</dbReference>
<dbReference type="InterPro" id="IPR050699">
    <property type="entry name" value="RNA-DNA_Helicase"/>
</dbReference>
<dbReference type="InterPro" id="IPR016438">
    <property type="entry name" value="SKI2-like"/>
</dbReference>
<dbReference type="InterPro" id="IPR012961">
    <property type="entry name" value="Ski2/MTR4_C"/>
</dbReference>
<dbReference type="PANTHER" id="PTHR12131">
    <property type="entry name" value="ATP-DEPENDENT RNA AND DNA HELICASE"/>
    <property type="match status" value="1"/>
</dbReference>
<dbReference type="PANTHER" id="PTHR12131:SF7">
    <property type="entry name" value="EXOSOME RNA HELICASE MTR4"/>
    <property type="match status" value="1"/>
</dbReference>
<dbReference type="Pfam" id="PF00270">
    <property type="entry name" value="DEAD"/>
    <property type="match status" value="1"/>
</dbReference>
<dbReference type="Pfam" id="PF08148">
    <property type="entry name" value="DSHCT"/>
    <property type="match status" value="1"/>
</dbReference>
<dbReference type="Pfam" id="PF00271">
    <property type="entry name" value="Helicase_C"/>
    <property type="match status" value="1"/>
</dbReference>
<dbReference type="Pfam" id="PF21408">
    <property type="entry name" value="MTR4-like_stalk"/>
    <property type="match status" value="1"/>
</dbReference>
<dbReference type="Pfam" id="PF13234">
    <property type="entry name" value="MTR4_beta-barrel"/>
    <property type="match status" value="1"/>
</dbReference>
<dbReference type="PIRSF" id="PIRSF005198">
    <property type="entry name" value="Antiviral_helicase_SKI2"/>
    <property type="match status" value="1"/>
</dbReference>
<dbReference type="SMART" id="SM00487">
    <property type="entry name" value="DEXDc"/>
    <property type="match status" value="1"/>
</dbReference>
<dbReference type="SMART" id="SM01142">
    <property type="entry name" value="DSHCT"/>
    <property type="match status" value="1"/>
</dbReference>
<dbReference type="SMART" id="SM00490">
    <property type="entry name" value="HELICc"/>
    <property type="match status" value="1"/>
</dbReference>
<dbReference type="SUPFAM" id="SSF52540">
    <property type="entry name" value="P-loop containing nucleoside triphosphate hydrolases"/>
    <property type="match status" value="1"/>
</dbReference>
<dbReference type="PROSITE" id="PS51192">
    <property type="entry name" value="HELICASE_ATP_BIND_1"/>
    <property type="match status" value="1"/>
</dbReference>
<dbReference type="PROSITE" id="PS51194">
    <property type="entry name" value="HELICASE_CTER"/>
    <property type="match status" value="1"/>
</dbReference>
<protein>
    <recommendedName>
        <fullName evidence="7">DExH-box ATP-dependent RNA helicase DExH10</fullName>
        <ecNumber>3.6.4.13</ecNumber>
    </recommendedName>
    <alternativeName>
        <fullName evidence="6">Protein HUA ENHANCER 2</fullName>
    </alternativeName>
</protein>
<accession>Q9ZVW2</accession>
<accession>Q941F4</accession>
<organism>
    <name type="scientific">Arabidopsis thaliana</name>
    <name type="common">Mouse-ear cress</name>
    <dbReference type="NCBI Taxonomy" id="3702"/>
    <lineage>
        <taxon>Eukaryota</taxon>
        <taxon>Viridiplantae</taxon>
        <taxon>Streptophyta</taxon>
        <taxon>Embryophyta</taxon>
        <taxon>Tracheophyta</taxon>
        <taxon>Spermatophyta</taxon>
        <taxon>Magnoliopsida</taxon>
        <taxon>eudicotyledons</taxon>
        <taxon>Gunneridae</taxon>
        <taxon>Pentapetalae</taxon>
        <taxon>rosids</taxon>
        <taxon>malvids</taxon>
        <taxon>Brassicales</taxon>
        <taxon>Brassicaceae</taxon>
        <taxon>Camelineae</taxon>
        <taxon>Arabidopsis</taxon>
    </lineage>
</organism>
<sequence length="995" mass="111889">MSAQMEEPETLGKRKESESSKLRSDETPTPEPRTKRRSLKRACVHEVAVPNDYTPTKEETIHGTLDNPVFNGDMAKTYPFKLDPFQSVSVACLERKESILVSAHTSAGKTAVAEYAIAMAFRDKQRVIYTSPLKALSNQKYRELQHEFKDVGLMTGDVTLSPNASCLVMTTEILRAMLYRGSEVLKEVAWVIFDEIHYMKDRERGVVWEESIIFLPPAIKMVFLSATMSNATEFAEWICYLHKQPCHVVYTDFRPTPLQHYAFPMGGGGLYLVVDDNEQFREDSFVKMQDTFPKPKSNDGKKSANGKSGGRGAKGGGGPGDSDVYKIVKMIMERKFEPVIIFSFSRRECEQHALSMSKLDFNTDEEKEVVEQVFNNAMQCLNEEDRSLPAIELMLPLLQRGIAVHHSGLLPVIKELVELLFQEGLVKALFATETFAMGLNMPAKTVVFTAVKKWDGDSHRYIGSGEYIQMSGRAGRRGKDERGICIIMIDEQMEMNTLRDMMLGKPAPLLSTFRLSYYTILNLLSRAEGQFTAEHVIRHSFHQFQHEKALPDIGNKVSKLEEEAAILNASGEAEVAEYHNLQFDIAKHEKKLMSEIIRPERVLCFLDTGRLVKIREGGTDWGWGVVVNVVKNSSVGTGSASSHGGGYIVDTLLHCSTGFSENGAKPKPCPPRAGEKGEMHVVPVQLPLISALSRLRISVPSDLRPVEARQSILLALQELSSRFPLGFPKLHPVKDMNIQDTEIVDLVSQIEEVEQKLLAHPMHKSEDDQQIKSFQRKAEVNYEIQQLKSKMRDSQLQKFRDELKNRSRVLKKLGHIDADGVVQVKGRAACLIDTGDELLVTELMFNGTFNDLDHHQVAALASCFIPVDKSNEQVNLRNELTKPLQQLQDSARKIAEIQHECKLEIDVEEYVESTIRPFLMDVIYSWSKGASFAEIIQMTDIFEGSIIRSARRLDEFLNQLRAAAEAVGESSLESKFAAASESLRRGIMFANSLYL</sequence>
<keyword id="KW-0007">Acetylation</keyword>
<keyword id="KW-0067">ATP-binding</keyword>
<keyword id="KW-0217">Developmental protein</keyword>
<keyword id="KW-0287">Flowering</keyword>
<keyword id="KW-0347">Helicase</keyword>
<keyword id="KW-0378">Hydrolase</keyword>
<keyword id="KW-0507">mRNA processing</keyword>
<keyword id="KW-0547">Nucleotide-binding</keyword>
<keyword id="KW-0539">Nucleus</keyword>
<keyword id="KW-1185">Reference proteome</keyword>
<keyword id="KW-0694">RNA-binding</keyword>
<evidence type="ECO:0000255" key="1">
    <source>
        <dbReference type="PROSITE-ProRule" id="PRU00541"/>
    </source>
</evidence>
<evidence type="ECO:0000255" key="2">
    <source>
        <dbReference type="PROSITE-ProRule" id="PRU00542"/>
    </source>
</evidence>
<evidence type="ECO:0000256" key="3">
    <source>
        <dbReference type="SAM" id="MobiDB-lite"/>
    </source>
</evidence>
<evidence type="ECO:0000269" key="4">
    <source>
    </source>
</evidence>
<evidence type="ECO:0000269" key="5">
    <source>
    </source>
</evidence>
<evidence type="ECO:0000303" key="6">
    <source>
    </source>
</evidence>
<evidence type="ECO:0000305" key="7"/>
<evidence type="ECO:0000312" key="8">
    <source>
        <dbReference type="Araport" id="AT2G06990"/>
    </source>
</evidence>
<evidence type="ECO:0000312" key="9">
    <source>
        <dbReference type="EMBL" id="AAC67203.2"/>
    </source>
</evidence>
<evidence type="ECO:0007744" key="10">
    <source>
    </source>
</evidence>
<reference key="1">
    <citation type="journal article" date="2002" name="Development">
        <title>HUA ENHANCER2, a putative DExH-box RNA helicase, maintains homeotic B and C gene expression in Arabidopsis.</title>
        <authorList>
            <person name="Western T.L."/>
            <person name="Cheng Y."/>
            <person name="Liu J."/>
            <person name="Chen X."/>
        </authorList>
    </citation>
    <scope>NUCLEOTIDE SEQUENCE [MRNA]</scope>
    <scope>FUNCTION</scope>
    <scope>DISRUPTION PHENOTYPE</scope>
    <scope>TISSUE SPECIFICITY</scope>
    <scope>DEVELOPMENTAL STAGE</scope>
    <source>
        <strain>cv. Columbia</strain>
        <strain>cv. Landsberg erecta</strain>
    </source>
</reference>
<reference key="2">
    <citation type="journal article" date="1999" name="Nature">
        <title>Sequence and analysis of chromosome 2 of the plant Arabidopsis thaliana.</title>
        <authorList>
            <person name="Lin X."/>
            <person name="Kaul S."/>
            <person name="Rounsley S.D."/>
            <person name="Shea T.P."/>
            <person name="Benito M.-I."/>
            <person name="Town C.D."/>
            <person name="Fujii C.Y."/>
            <person name="Mason T.M."/>
            <person name="Bowman C.L."/>
            <person name="Barnstead M.E."/>
            <person name="Feldblyum T.V."/>
            <person name="Buell C.R."/>
            <person name="Ketchum K.A."/>
            <person name="Lee J.J."/>
            <person name="Ronning C.M."/>
            <person name="Koo H.L."/>
            <person name="Moffat K.S."/>
            <person name="Cronin L.A."/>
            <person name="Shen M."/>
            <person name="Pai G."/>
            <person name="Van Aken S."/>
            <person name="Umayam L."/>
            <person name="Tallon L.J."/>
            <person name="Gill J.E."/>
            <person name="Adams M.D."/>
            <person name="Carrera A.J."/>
            <person name="Creasy T.H."/>
            <person name="Goodman H.M."/>
            <person name="Somerville C.R."/>
            <person name="Copenhaver G.P."/>
            <person name="Preuss D."/>
            <person name="Nierman W.C."/>
            <person name="White O."/>
            <person name="Eisen J.A."/>
            <person name="Salzberg S.L."/>
            <person name="Fraser C.M."/>
            <person name="Venter J.C."/>
        </authorList>
    </citation>
    <scope>NUCLEOTIDE SEQUENCE [LARGE SCALE GENOMIC DNA]</scope>
    <source>
        <strain>cv. Columbia</strain>
    </source>
</reference>
<reference key="3">
    <citation type="journal article" date="2017" name="Plant J.">
        <title>Araport11: a complete reannotation of the Arabidopsis thaliana reference genome.</title>
        <authorList>
            <person name="Cheng C.Y."/>
            <person name="Krishnakumar V."/>
            <person name="Chan A.P."/>
            <person name="Thibaud-Nissen F."/>
            <person name="Schobel S."/>
            <person name="Town C.D."/>
        </authorList>
    </citation>
    <scope>GENOME REANNOTATION</scope>
    <source>
        <strain>cv. Columbia</strain>
    </source>
</reference>
<reference key="4">
    <citation type="journal article" date="2003" name="Science">
        <title>Empirical analysis of transcriptional activity in the Arabidopsis genome.</title>
        <authorList>
            <person name="Yamada K."/>
            <person name="Lim J."/>
            <person name="Dale J.M."/>
            <person name="Chen H."/>
            <person name="Shinn P."/>
            <person name="Palm C.J."/>
            <person name="Southwick A.M."/>
            <person name="Wu H.C."/>
            <person name="Kim C.J."/>
            <person name="Nguyen M."/>
            <person name="Pham P.K."/>
            <person name="Cheuk R.F."/>
            <person name="Karlin-Newmann G."/>
            <person name="Liu S.X."/>
            <person name="Lam B."/>
            <person name="Sakano H."/>
            <person name="Wu T."/>
            <person name="Yu G."/>
            <person name="Miranda M."/>
            <person name="Quach H.L."/>
            <person name="Tripp M."/>
            <person name="Chang C.H."/>
            <person name="Lee J.M."/>
            <person name="Toriumi M.J."/>
            <person name="Chan M.M."/>
            <person name="Tang C.C."/>
            <person name="Onodera C.S."/>
            <person name="Deng J.M."/>
            <person name="Akiyama K."/>
            <person name="Ansari Y."/>
            <person name="Arakawa T."/>
            <person name="Banh J."/>
            <person name="Banno F."/>
            <person name="Bowser L."/>
            <person name="Brooks S.Y."/>
            <person name="Carninci P."/>
            <person name="Chao Q."/>
            <person name="Choy N."/>
            <person name="Enju A."/>
            <person name="Goldsmith A.D."/>
            <person name="Gurjal M."/>
            <person name="Hansen N.F."/>
            <person name="Hayashizaki Y."/>
            <person name="Johnson-Hopson C."/>
            <person name="Hsuan V.W."/>
            <person name="Iida K."/>
            <person name="Karnes M."/>
            <person name="Khan S."/>
            <person name="Koesema E."/>
            <person name="Ishida J."/>
            <person name="Jiang P.X."/>
            <person name="Jones T."/>
            <person name="Kawai J."/>
            <person name="Kamiya A."/>
            <person name="Meyers C."/>
            <person name="Nakajima M."/>
            <person name="Narusaka M."/>
            <person name="Seki M."/>
            <person name="Sakurai T."/>
            <person name="Satou M."/>
            <person name="Tamse R."/>
            <person name="Vaysberg M."/>
            <person name="Wallender E.K."/>
            <person name="Wong C."/>
            <person name="Yamamura Y."/>
            <person name="Yuan S."/>
            <person name="Shinozaki K."/>
            <person name="Davis R.W."/>
            <person name="Theologis A."/>
            <person name="Ecker J.R."/>
        </authorList>
    </citation>
    <scope>NUCLEOTIDE SEQUENCE [LARGE SCALE MRNA]</scope>
    <source>
        <strain>cv. Columbia</strain>
    </source>
</reference>
<reference key="5">
    <citation type="journal article" date="2002" name="Trends Plant Sci.">
        <title>New members of the floral organ identity AGAMOUS pathway.</title>
        <authorList>
            <person name="Jack T."/>
        </authorList>
    </citation>
    <scope>REVIEW</scope>
</reference>
<reference key="6">
    <citation type="journal article" date="2012" name="Mol. Cell. Proteomics">
        <title>Comparative large-scale characterisation of plant vs. mammal proteins reveals similar and idiosyncratic N-alpha acetylation features.</title>
        <authorList>
            <person name="Bienvenut W.V."/>
            <person name="Sumpton D."/>
            <person name="Martinez A."/>
            <person name="Lilla S."/>
            <person name="Espagne C."/>
            <person name="Meinnel T."/>
            <person name="Giglione C."/>
        </authorList>
    </citation>
    <scope>ACETYLATION [LARGE SCALE ANALYSIS] AT SER-2</scope>
    <scope>CLEAVAGE OF INITIATOR METHIONINE [LARGE SCALE ANALYSIS]</scope>
    <scope>IDENTIFICATION BY MASS SPECTROMETRY [LARGE SCALE ANALYSIS]</scope>
</reference>
<reference key="7">
    <citation type="journal article" date="2013" name="PLoS ONE">
        <title>Genome-wide comparative in silico analysis of the RNA helicase gene family in Zea mays and Glycine max: a comparison with Arabidopsis and Oryza sativa.</title>
        <authorList>
            <person name="Xu R."/>
            <person name="Zhang S."/>
            <person name="Huang J."/>
            <person name="Zheng C."/>
        </authorList>
    </citation>
    <scope>GENE FAMILY</scope>
</reference>
<reference key="8">
    <citation type="journal article" date="2014" name="PLoS Genet.">
        <title>The RNA helicases AtMTR4 and HEN2 target specific subsets of nuclear transcripts for degradation by the nuclear exosome in Arabidopsis thaliana.</title>
        <authorList>
            <person name="Lange H."/>
            <person name="Zuber H."/>
            <person name="Sement F.M."/>
            <person name="Chicher J."/>
            <person name="Kuhn L."/>
            <person name="Hammann P."/>
            <person name="Brunaud V."/>
            <person name="Berard C."/>
            <person name="Bouteiller N."/>
            <person name="Balzergue S."/>
            <person name="Aubourg S."/>
            <person name="Martin-Magniette M.L."/>
            <person name="Vaucheret H."/>
            <person name="Gagliardi D."/>
        </authorList>
    </citation>
    <scope>FUNCTION</scope>
    <scope>SUBCELLULAR LOCATION</scope>
    <scope>DISRUPTION PHENOTYPE</scope>
    <scope>ASSOCIATION WITH THE RNA EXOSOME COMPLEX</scope>
</reference>
<proteinExistence type="evidence at protein level"/>
<comment type="function">
    <text evidence="4 5">ATP-dependent RNA helicase that associates with the RNA exosome complex, with the cap binding complex (CBC) and with the NEXT-like complex. Involved in the degradation of a large number of non-coding nuclear exosome substrates such as snoRNA and miRNA precursors, incompletely spliced mRNAs, and spurious transcripts produced from pseudogenes and intergenic regions (PubMed:25144737). Involved in the maintenance of homeotic B and C gene expression in the reproductive whorls. Regulates floral organ spacing and identity, probably through the regulation of protein synthesis or mRNA degradation (PubMed:11923195).</text>
</comment>
<comment type="catalytic activity">
    <reaction>
        <text>ATP + H2O = ADP + phosphate + H(+)</text>
        <dbReference type="Rhea" id="RHEA:13065"/>
        <dbReference type="ChEBI" id="CHEBI:15377"/>
        <dbReference type="ChEBI" id="CHEBI:15378"/>
        <dbReference type="ChEBI" id="CHEBI:30616"/>
        <dbReference type="ChEBI" id="CHEBI:43474"/>
        <dbReference type="ChEBI" id="CHEBI:456216"/>
        <dbReference type="EC" id="3.6.4.13"/>
    </reaction>
</comment>
<comment type="subcellular location">
    <subcellularLocation>
        <location evidence="5">Nucleus</location>
        <location evidence="5">Nucleoplasm</location>
    </subcellularLocation>
</comment>
<comment type="tissue specificity">
    <text evidence="4">Expressed in inflorescences, leaves, stems, and roots.</text>
</comment>
<comment type="developmental stage">
    <text evidence="4">Expressed in specific patterns in the inflorescence meristem and developing flowers. Present throughout the inflorescence meristem and in young floral meristems through stage 4. Around stage 5, present within the developing organs of the inner three whorls but absent from sepals. At later stage of floral development, present at a low level in the gynoecium but accumulate strongly in developing ovules.</text>
</comment>
<comment type="disruption phenotype">
    <text evidence="4 5">When combined with mutations in HUA1 and HUA2, reduced stem elongation and alterations in production of flowers along the inflorescence. These flowers are characterized by the presence of third whorl sepal-petal-stamens and fourth whorl sepal-carpels leading to abnormal floral organ number and positioning. Over-accumulation of non-coding nuclear exososome targets (PubMed:25144737).</text>
</comment>
<comment type="similarity">
    <text evidence="7">Belongs to the DExH box helicase family. SKI2 subfamily.</text>
</comment>
<comment type="sequence caution" evidence="7">
    <conflict type="erroneous initiation">
        <sequence resource="EMBL-CDS" id="AAL11446"/>
    </conflict>
    <text>Truncated N-terminus.</text>
</comment>